<reference key="1">
    <citation type="journal article" date="2009" name="Infect. Immun.">
        <title>Comparative genomics reveal extensive transposon-mediated genomic plasticity and diversity among potential effector proteins within the genus Coxiella.</title>
        <authorList>
            <person name="Beare P.A."/>
            <person name="Unsworth N."/>
            <person name="Andoh M."/>
            <person name="Voth D.E."/>
            <person name="Omsland A."/>
            <person name="Gilk S.D."/>
            <person name="Williams K.P."/>
            <person name="Sobral B.W."/>
            <person name="Kupko J.J. III"/>
            <person name="Porcella S.F."/>
            <person name="Samuel J.E."/>
            <person name="Heinzen R.A."/>
        </authorList>
    </citation>
    <scope>NUCLEOTIDE SEQUENCE [LARGE SCALE GENOMIC DNA]</scope>
    <source>
        <strain>CbuG_Q212</strain>
    </source>
</reference>
<comment type="function">
    <text evidence="2">One of the essential components for the initiation of protein synthesis. Protects formylmethionyl-tRNA from spontaneous hydrolysis and promotes its binding to the 30S ribosomal subunits. Also involved in the hydrolysis of GTP during the formation of the 70S ribosomal complex.</text>
</comment>
<comment type="subcellular location">
    <subcellularLocation>
        <location evidence="2">Cytoplasm</location>
    </subcellularLocation>
</comment>
<comment type="similarity">
    <text evidence="2">Belongs to the TRAFAC class translation factor GTPase superfamily. Classic translation factor GTPase family. IF-2 subfamily.</text>
</comment>
<organism>
    <name type="scientific">Coxiella burnetii (strain CbuG_Q212)</name>
    <name type="common">Coxiella burnetii (strain Q212)</name>
    <dbReference type="NCBI Taxonomy" id="434923"/>
    <lineage>
        <taxon>Bacteria</taxon>
        <taxon>Pseudomonadati</taxon>
        <taxon>Pseudomonadota</taxon>
        <taxon>Gammaproteobacteria</taxon>
        <taxon>Legionellales</taxon>
        <taxon>Coxiellaceae</taxon>
        <taxon>Coxiella</taxon>
    </lineage>
</organism>
<gene>
    <name evidence="2" type="primary">infB</name>
    <name type="ordered locus">CbuG_0577</name>
</gene>
<sequence length="803" mass="88492">MADMSVKQLADLVRTTPERLLEQLKEAGVAITHVDQTISDEEKRKLLLHLKTSHSTETDKKRSKIVLKRKKLSVVKSGKKSVNVEIRSKRTYTKPVVEQKRETEPAPTQEVPLTSDTTNLNEKAEVNVATLEKAVEAEVKEEAKKTPSEKKETPKKGPRKETRRSRKPDKEDKWEREELHMTKLVEERRRRHKPAHVPDSDSASAKLEQGFARPTAPVVREVALPESITVADLAQKMSVKAAEVIKAMMKLGAMVTINQRIDQETAAIVVEEMGHKPKLIKEDVLEENLVATLGEQIGEAVPRAPVVTIMGHVDHGKTSLLDYIRRTKVTSTEAGGITQHIGAYHVETELGMITFLDTPGHEAFTAMRARGAKCTDIVVLVVAADDGVMPQTVEAIQHARAAKVPVVVAVNKIDKPEADPERIKTELSTHDVLPEEWGGDTMFQPISAKTGEGIDALLERILLQAEVLELKAVDNGPARGMVVESRLDRGRGPVATVLVTSGELHLGDILLVGREYGRVRAMIGDDGRPCESAGPSMPVEVLGLSGTPVAGEEAIVVPDERKAREIARFRQGKYREVRLAKKQTAHLERIFDRMGEGKQNTLNIVLKADVQGSLEALTEALNKLSTDEVKVNIIASGVGGITESDVNLAIASDAVVIGFNVRADAPTRVLVEREGVDLRYYSIIYDLIDEVKKALSGLLAPEFEEKIVGLAEVRDVFRSSKIGAIAGCMVVEGVVRRHLPIRVLRDNVVIYEGQLESLRRYKEDVAEVRQGTECGIGVKNYNDVKVGDQIEVYEKTQVHRTIA</sequence>
<dbReference type="EMBL" id="CP001019">
    <property type="protein sequence ID" value="ACJ17989.1"/>
    <property type="molecule type" value="Genomic_DNA"/>
</dbReference>
<dbReference type="RefSeq" id="WP_012569826.1">
    <property type="nucleotide sequence ID" value="NC_011527.1"/>
</dbReference>
<dbReference type="SMR" id="B6IZ61"/>
<dbReference type="KEGG" id="cbg:CbuG_0577"/>
<dbReference type="HOGENOM" id="CLU_006301_6_1_6"/>
<dbReference type="GO" id="GO:0005829">
    <property type="term" value="C:cytosol"/>
    <property type="evidence" value="ECO:0007669"/>
    <property type="project" value="TreeGrafter"/>
</dbReference>
<dbReference type="GO" id="GO:0005525">
    <property type="term" value="F:GTP binding"/>
    <property type="evidence" value="ECO:0007669"/>
    <property type="project" value="UniProtKB-KW"/>
</dbReference>
<dbReference type="GO" id="GO:0003924">
    <property type="term" value="F:GTPase activity"/>
    <property type="evidence" value="ECO:0007669"/>
    <property type="project" value="UniProtKB-UniRule"/>
</dbReference>
<dbReference type="GO" id="GO:0003743">
    <property type="term" value="F:translation initiation factor activity"/>
    <property type="evidence" value="ECO:0007669"/>
    <property type="project" value="UniProtKB-UniRule"/>
</dbReference>
<dbReference type="CDD" id="cd01887">
    <property type="entry name" value="IF2_eIF5B"/>
    <property type="match status" value="1"/>
</dbReference>
<dbReference type="CDD" id="cd03702">
    <property type="entry name" value="IF2_mtIF2_II"/>
    <property type="match status" value="1"/>
</dbReference>
<dbReference type="CDD" id="cd03692">
    <property type="entry name" value="mtIF2_IVc"/>
    <property type="match status" value="1"/>
</dbReference>
<dbReference type="FunFam" id="2.40.30.10:FF:000007">
    <property type="entry name" value="Translation initiation factor IF-2"/>
    <property type="match status" value="1"/>
</dbReference>
<dbReference type="FunFam" id="2.40.30.10:FF:000008">
    <property type="entry name" value="Translation initiation factor IF-2"/>
    <property type="match status" value="1"/>
</dbReference>
<dbReference type="FunFam" id="3.40.50.10050:FF:000001">
    <property type="entry name" value="Translation initiation factor IF-2"/>
    <property type="match status" value="1"/>
</dbReference>
<dbReference type="FunFam" id="3.40.50.300:FF:000019">
    <property type="entry name" value="Translation initiation factor IF-2"/>
    <property type="match status" value="1"/>
</dbReference>
<dbReference type="Gene3D" id="3.40.50.300">
    <property type="entry name" value="P-loop containing nucleotide triphosphate hydrolases"/>
    <property type="match status" value="1"/>
</dbReference>
<dbReference type="Gene3D" id="3.30.56.50">
    <property type="entry name" value="Putative DNA-binding domain, N-terminal subdomain of bacterial translation initiation factor IF2"/>
    <property type="match status" value="1"/>
</dbReference>
<dbReference type="Gene3D" id="2.40.30.10">
    <property type="entry name" value="Translation factors"/>
    <property type="match status" value="2"/>
</dbReference>
<dbReference type="Gene3D" id="3.40.50.10050">
    <property type="entry name" value="Translation initiation factor IF- 2, domain 3"/>
    <property type="match status" value="1"/>
</dbReference>
<dbReference type="HAMAP" id="MF_00100_B">
    <property type="entry name" value="IF_2_B"/>
    <property type="match status" value="1"/>
</dbReference>
<dbReference type="InterPro" id="IPR009061">
    <property type="entry name" value="DNA-bd_dom_put_sf"/>
</dbReference>
<dbReference type="InterPro" id="IPR053905">
    <property type="entry name" value="EF-G-like_DII"/>
</dbReference>
<dbReference type="InterPro" id="IPR044145">
    <property type="entry name" value="IF2_II"/>
</dbReference>
<dbReference type="InterPro" id="IPR006847">
    <property type="entry name" value="IF2_N"/>
</dbReference>
<dbReference type="InterPro" id="IPR027417">
    <property type="entry name" value="P-loop_NTPase"/>
</dbReference>
<dbReference type="InterPro" id="IPR005225">
    <property type="entry name" value="Small_GTP-bd"/>
</dbReference>
<dbReference type="InterPro" id="IPR000795">
    <property type="entry name" value="T_Tr_GTP-bd_dom"/>
</dbReference>
<dbReference type="InterPro" id="IPR000178">
    <property type="entry name" value="TF_IF2_bacterial-like"/>
</dbReference>
<dbReference type="InterPro" id="IPR015760">
    <property type="entry name" value="TIF_IF2"/>
</dbReference>
<dbReference type="InterPro" id="IPR023115">
    <property type="entry name" value="TIF_IF2_dom3"/>
</dbReference>
<dbReference type="InterPro" id="IPR036925">
    <property type="entry name" value="TIF_IF2_dom3_sf"/>
</dbReference>
<dbReference type="InterPro" id="IPR009000">
    <property type="entry name" value="Transl_B-barrel_sf"/>
</dbReference>
<dbReference type="NCBIfam" id="TIGR00487">
    <property type="entry name" value="IF-2"/>
    <property type="match status" value="1"/>
</dbReference>
<dbReference type="NCBIfam" id="TIGR00231">
    <property type="entry name" value="small_GTP"/>
    <property type="match status" value="1"/>
</dbReference>
<dbReference type="PANTHER" id="PTHR43381:SF5">
    <property type="entry name" value="TR-TYPE G DOMAIN-CONTAINING PROTEIN"/>
    <property type="match status" value="1"/>
</dbReference>
<dbReference type="PANTHER" id="PTHR43381">
    <property type="entry name" value="TRANSLATION INITIATION FACTOR IF-2-RELATED"/>
    <property type="match status" value="1"/>
</dbReference>
<dbReference type="Pfam" id="PF22042">
    <property type="entry name" value="EF-G_D2"/>
    <property type="match status" value="1"/>
</dbReference>
<dbReference type="Pfam" id="PF00009">
    <property type="entry name" value="GTP_EFTU"/>
    <property type="match status" value="1"/>
</dbReference>
<dbReference type="Pfam" id="PF11987">
    <property type="entry name" value="IF-2"/>
    <property type="match status" value="1"/>
</dbReference>
<dbReference type="Pfam" id="PF04760">
    <property type="entry name" value="IF2_N"/>
    <property type="match status" value="2"/>
</dbReference>
<dbReference type="SUPFAM" id="SSF52156">
    <property type="entry name" value="Initiation factor IF2/eIF5b, domain 3"/>
    <property type="match status" value="1"/>
</dbReference>
<dbReference type="SUPFAM" id="SSF52540">
    <property type="entry name" value="P-loop containing nucleoside triphosphate hydrolases"/>
    <property type="match status" value="1"/>
</dbReference>
<dbReference type="SUPFAM" id="SSF46955">
    <property type="entry name" value="Putative DNA-binding domain"/>
    <property type="match status" value="1"/>
</dbReference>
<dbReference type="SUPFAM" id="SSF50447">
    <property type="entry name" value="Translation proteins"/>
    <property type="match status" value="2"/>
</dbReference>
<dbReference type="PROSITE" id="PS51722">
    <property type="entry name" value="G_TR_2"/>
    <property type="match status" value="1"/>
</dbReference>
<dbReference type="PROSITE" id="PS01176">
    <property type="entry name" value="IF2"/>
    <property type="match status" value="1"/>
</dbReference>
<name>IF2_COXB2</name>
<proteinExistence type="inferred from homology"/>
<evidence type="ECO:0000250" key="1"/>
<evidence type="ECO:0000255" key="2">
    <source>
        <dbReference type="HAMAP-Rule" id="MF_00100"/>
    </source>
</evidence>
<evidence type="ECO:0000256" key="3">
    <source>
        <dbReference type="SAM" id="MobiDB-lite"/>
    </source>
</evidence>
<accession>B6IZ61</accession>
<keyword id="KW-0963">Cytoplasm</keyword>
<keyword id="KW-0342">GTP-binding</keyword>
<keyword id="KW-0396">Initiation factor</keyword>
<keyword id="KW-0547">Nucleotide-binding</keyword>
<keyword id="KW-0648">Protein biosynthesis</keyword>
<protein>
    <recommendedName>
        <fullName evidence="2">Translation initiation factor IF-2</fullName>
    </recommendedName>
</protein>
<feature type="chain" id="PRO_1000093779" description="Translation initiation factor IF-2">
    <location>
        <begin position="1"/>
        <end position="803"/>
    </location>
</feature>
<feature type="domain" description="tr-type G">
    <location>
        <begin position="302"/>
        <end position="471"/>
    </location>
</feature>
<feature type="region of interest" description="Disordered" evidence="3">
    <location>
        <begin position="95"/>
        <end position="125"/>
    </location>
</feature>
<feature type="region of interest" description="Disordered" evidence="3">
    <location>
        <begin position="138"/>
        <end position="209"/>
    </location>
</feature>
<feature type="region of interest" description="G1" evidence="1">
    <location>
        <begin position="311"/>
        <end position="318"/>
    </location>
</feature>
<feature type="region of interest" description="G2" evidence="1">
    <location>
        <begin position="336"/>
        <end position="340"/>
    </location>
</feature>
<feature type="region of interest" description="G3" evidence="1">
    <location>
        <begin position="357"/>
        <end position="360"/>
    </location>
</feature>
<feature type="region of interest" description="G4" evidence="1">
    <location>
        <begin position="411"/>
        <end position="414"/>
    </location>
</feature>
<feature type="region of interest" description="G5" evidence="1">
    <location>
        <begin position="447"/>
        <end position="449"/>
    </location>
</feature>
<feature type="compositionally biased region" description="Polar residues" evidence="3">
    <location>
        <begin position="111"/>
        <end position="121"/>
    </location>
</feature>
<feature type="compositionally biased region" description="Basic and acidic residues" evidence="3">
    <location>
        <begin position="138"/>
        <end position="155"/>
    </location>
</feature>
<feature type="compositionally biased region" description="Basic residues" evidence="3">
    <location>
        <begin position="156"/>
        <end position="167"/>
    </location>
</feature>
<feature type="compositionally biased region" description="Basic and acidic residues" evidence="3">
    <location>
        <begin position="168"/>
        <end position="188"/>
    </location>
</feature>
<feature type="binding site" evidence="2">
    <location>
        <begin position="311"/>
        <end position="318"/>
    </location>
    <ligand>
        <name>GTP</name>
        <dbReference type="ChEBI" id="CHEBI:37565"/>
    </ligand>
</feature>
<feature type="binding site" evidence="2">
    <location>
        <begin position="357"/>
        <end position="361"/>
    </location>
    <ligand>
        <name>GTP</name>
        <dbReference type="ChEBI" id="CHEBI:37565"/>
    </ligand>
</feature>
<feature type="binding site" evidence="2">
    <location>
        <begin position="411"/>
        <end position="414"/>
    </location>
    <ligand>
        <name>GTP</name>
        <dbReference type="ChEBI" id="CHEBI:37565"/>
    </ligand>
</feature>